<evidence type="ECO:0000250" key="1">
    <source>
        <dbReference type="UniProtKB" id="Q6CJY0"/>
    </source>
</evidence>
<evidence type="ECO:0000255" key="2"/>
<evidence type="ECO:0000256" key="3">
    <source>
        <dbReference type="SAM" id="MobiDB-lite"/>
    </source>
</evidence>
<evidence type="ECO:0000269" key="4">
    <source>
    </source>
</evidence>
<evidence type="ECO:0000269" key="5">
    <source>
    </source>
</evidence>
<evidence type="ECO:0000269" key="6">
    <source>
    </source>
</evidence>
<evidence type="ECO:0000269" key="7">
    <source>
    </source>
</evidence>
<evidence type="ECO:0000269" key="8">
    <source>
    </source>
</evidence>
<evidence type="ECO:0000269" key="9">
    <source>
    </source>
</evidence>
<evidence type="ECO:0000269" key="10">
    <source>
    </source>
</evidence>
<evidence type="ECO:0000303" key="11">
    <source>
    </source>
</evidence>
<evidence type="ECO:0000303" key="12">
    <source>
    </source>
</evidence>
<evidence type="ECO:0000305" key="13"/>
<evidence type="ECO:0000312" key="14">
    <source>
        <dbReference type="SGD" id="S000003411"/>
    </source>
</evidence>
<evidence type="ECO:0007744" key="15">
    <source>
    </source>
</evidence>
<evidence type="ECO:0007744" key="16">
    <source>
    </source>
</evidence>
<evidence type="ECO:0007829" key="17">
    <source>
        <dbReference type="PDB" id="8OVW"/>
    </source>
</evidence>
<evidence type="ECO:0007829" key="18">
    <source>
        <dbReference type="PDB" id="8OVX"/>
    </source>
</evidence>
<evidence type="ECO:0007829" key="19">
    <source>
        <dbReference type="PDB" id="8T0P"/>
    </source>
</evidence>
<feature type="chain" id="PRO_0000058039" description="Inner kinetochore subunit OKP1">
    <location>
        <begin position="1"/>
        <end position="406"/>
    </location>
</feature>
<feature type="region of interest" description="Disordered" evidence="3">
    <location>
        <begin position="1"/>
        <end position="37"/>
    </location>
</feature>
<feature type="region of interest" description="Disordered" evidence="3">
    <location>
        <begin position="59"/>
        <end position="122"/>
    </location>
</feature>
<feature type="region of interest" description="CTF19-MCM21 binding motif" evidence="1">
    <location>
        <begin position="317"/>
        <end position="340"/>
    </location>
</feature>
<feature type="region of interest" description="Interaction with NKP1-NKP2" evidence="10">
    <location>
        <begin position="353"/>
        <end position="400"/>
    </location>
</feature>
<feature type="region of interest" description="Disordered" evidence="3">
    <location>
        <begin position="379"/>
        <end position="406"/>
    </location>
</feature>
<feature type="coiled-coil region" evidence="2">
    <location>
        <begin position="239"/>
        <end position="285"/>
    </location>
</feature>
<feature type="compositionally biased region" description="Polar residues" evidence="3">
    <location>
        <begin position="8"/>
        <end position="21"/>
    </location>
</feature>
<feature type="compositionally biased region" description="Low complexity" evidence="3">
    <location>
        <begin position="26"/>
        <end position="37"/>
    </location>
</feature>
<feature type="compositionally biased region" description="Acidic residues" evidence="3">
    <location>
        <begin position="69"/>
        <end position="78"/>
    </location>
</feature>
<feature type="compositionally biased region" description="Basic and acidic residues" evidence="3">
    <location>
        <begin position="79"/>
        <end position="89"/>
    </location>
</feature>
<feature type="compositionally biased region" description="Basic and acidic residues" evidence="3">
    <location>
        <begin position="97"/>
        <end position="106"/>
    </location>
</feature>
<feature type="compositionally biased region" description="Polar residues" evidence="3">
    <location>
        <begin position="107"/>
        <end position="122"/>
    </location>
</feature>
<feature type="compositionally biased region" description="Basic and acidic residues" evidence="3">
    <location>
        <begin position="380"/>
        <end position="406"/>
    </location>
</feature>
<feature type="modified residue" description="Phosphoserine" evidence="15 16">
    <location>
        <position position="70"/>
    </location>
</feature>
<feature type="helix" evidence="19">
    <location>
        <begin position="130"/>
        <end position="141"/>
    </location>
</feature>
<feature type="helix" evidence="19">
    <location>
        <begin position="146"/>
        <end position="148"/>
    </location>
</feature>
<feature type="helix" evidence="19">
    <location>
        <begin position="156"/>
        <end position="180"/>
    </location>
</feature>
<feature type="helix" evidence="19">
    <location>
        <begin position="182"/>
        <end position="188"/>
    </location>
</feature>
<feature type="turn" evidence="19">
    <location>
        <begin position="189"/>
        <end position="191"/>
    </location>
</feature>
<feature type="helix" evidence="19">
    <location>
        <begin position="193"/>
        <end position="219"/>
    </location>
</feature>
<feature type="helix" evidence="19">
    <location>
        <begin position="229"/>
        <end position="232"/>
    </location>
</feature>
<feature type="helix" evidence="19">
    <location>
        <begin position="234"/>
        <end position="273"/>
    </location>
</feature>
<feature type="helix" evidence="18">
    <location>
        <begin position="278"/>
        <end position="290"/>
    </location>
</feature>
<feature type="helix" evidence="17">
    <location>
        <begin position="298"/>
        <end position="300"/>
    </location>
</feature>
<feature type="helix" evidence="17">
    <location>
        <begin position="301"/>
        <end position="307"/>
    </location>
</feature>
<feature type="helix" evidence="17">
    <location>
        <begin position="322"/>
        <end position="331"/>
    </location>
</feature>
<feature type="strand" evidence="18">
    <location>
        <begin position="344"/>
        <end position="346"/>
    </location>
</feature>
<feature type="helix" evidence="17">
    <location>
        <begin position="350"/>
        <end position="356"/>
    </location>
</feature>
<feature type="helix" evidence="17">
    <location>
        <begin position="359"/>
        <end position="381"/>
    </location>
</feature>
<feature type="helix" evidence="17">
    <location>
        <begin position="383"/>
        <end position="388"/>
    </location>
</feature>
<gene>
    <name evidence="11" type="primary">OKP1</name>
    <name evidence="14" type="ordered locus">YGR179C</name>
</gene>
<sequence>MAADRDNFLQNIENDSINNGQAMDLSPNRSSSESDSSILMNVNDIKTLRLDVAPEAKSTQSKKSLFYENSDDAEEGEIEERTNKEEGQYHHKGSKQLRFEVGKESTGKLQSHLSDGSATSGEGNVRPWEFRKVIQAEYRERLPRNYELKHWKKPSKIMIGSILRLLETNTVSALDSVFEKYEKEMNQMTHGDNNEVKRIYSKKERLLEIILTKIKKKLRQAKFPSRISERDLDIEYIYSKRQFIQNRYSQELQNNERLEAILSREQNLLEETRKLCMNLKTNNKKRLTEKLIQKDLHPVLNKAMEYTYGLESTNGFMHPDGPVTFRNDSHELNLMLNDPIKSTADVRLDKEEVLSLLPSLKEYTKKSKELKETMGQMISDSHEEEIKEVFVPHHESHQDKTEEDIH</sequence>
<comment type="function">
    <text evidence="4 8">Component of the kinetochore, a multiprotein complex that assembles on centromeric DNA and attaches chromosomes to spindle microtubules, mediating chromosome segregation and sister chromatid segregation during meiosis and mitosis. Component of the inner kinetochore COMA complex, which connects centromere-associated proteins and the outer kinetochore. COMA interacts with other inner kinetochore proteins to form the inner kinetochore constitutive centromere-associated network (CCAN), which serves as a structural platform for outer kinetochore assembly.</text>
</comment>
<comment type="subunit">
    <text evidence="5 8 9 10">Component of the heterotetrameric kinetochore subcomplex COMA, which consists of AME1, CTF19, MCM21 and OKP1 (PubMed:14633972). The COMA subcomplex is part of a larger constitutive centromere-associated network (CCAN) (also known as central kinetochore CTF19 complex in yeast), which is composed of at least AME1, CHL4, CNN1, CTF3, CTF19, IML3, MCM16, MCM21, MCM22, MHF1, MHF2, MIF2, NKP1, NKP2, OKP1 and WIP1 (PubMed:12408861, PubMed:22561346). COMA binds the centromeric nucleosome-binding protein MIF2, and to the outer kinetochore MIND subcomplex. OKP1 interacts directly with AME1, with an NKP1-NKP2 dimer, and with CTF19-MCM21 (PubMed:29046335).</text>
</comment>
<comment type="interaction">
    <interactant intactId="EBI-23429">
        <id>P53298</id>
    </interactant>
    <interactant intactId="EBI-23268">
        <id>P53267</id>
        <label>DAM1</label>
    </interactant>
    <organismsDiffer>false</organismsDiffer>
    <experiments>2</experiments>
</comment>
<comment type="subcellular location">
    <subcellularLocation>
        <location evidence="6">Nucleus</location>
    </subcellularLocation>
    <subcellularLocation>
        <location evidence="4">Chromosome</location>
        <location evidence="4">Centromere</location>
        <location evidence="4">Kinetochore</location>
    </subcellularLocation>
</comment>
<comment type="miscellaneous">
    <text evidence="7">Present with 2688 molecules/cell in log phase SD medium.</text>
</comment>
<comment type="similarity">
    <text evidence="13">Belongs to the CENP-Q/OKP1 family.</text>
</comment>
<accession>P53298</accession>
<accession>D6VUW3</accession>
<proteinExistence type="evidence at protein level"/>
<name>CENPQ_YEAST</name>
<dbReference type="EMBL" id="Z72964">
    <property type="protein sequence ID" value="CAA97205.1"/>
    <property type="molecule type" value="Genomic_DNA"/>
</dbReference>
<dbReference type="EMBL" id="AY557837">
    <property type="protein sequence ID" value="AAS56163.1"/>
    <property type="molecule type" value="Genomic_DNA"/>
</dbReference>
<dbReference type="EMBL" id="BK006941">
    <property type="protein sequence ID" value="DAA08274.1"/>
    <property type="molecule type" value="Genomic_DNA"/>
</dbReference>
<dbReference type="PIR" id="S64493">
    <property type="entry name" value="S64493"/>
</dbReference>
<dbReference type="RefSeq" id="NP_011695.1">
    <property type="nucleotide sequence ID" value="NM_001181308.1"/>
</dbReference>
<dbReference type="PDB" id="6NUW">
    <property type="method" value="EM"/>
    <property type="resolution" value="4.25 A"/>
    <property type="chains" value="F=1-406"/>
</dbReference>
<dbReference type="PDB" id="6QLD">
    <property type="method" value="EM"/>
    <property type="resolution" value="4.15 A"/>
    <property type="chains" value="Q=161-391"/>
</dbReference>
<dbReference type="PDB" id="6QLE">
    <property type="method" value="EM"/>
    <property type="resolution" value="3.55 A"/>
    <property type="chains" value="Q=161-406"/>
</dbReference>
<dbReference type="PDB" id="6QLF">
    <property type="method" value="EM"/>
    <property type="resolution" value="3.45 A"/>
    <property type="chains" value="Q=1-406"/>
</dbReference>
<dbReference type="PDB" id="8OVW">
    <property type="method" value="EM"/>
    <property type="resolution" value="3.40 A"/>
    <property type="chains" value="Q=1-406"/>
</dbReference>
<dbReference type="PDB" id="8OVX">
    <property type="method" value="EM"/>
    <property type="resolution" value="3.40 A"/>
    <property type="chains" value="Q=1-406"/>
</dbReference>
<dbReference type="PDB" id="8OW0">
    <property type="method" value="EM"/>
    <property type="resolution" value="3.40 A"/>
    <property type="chains" value="Q=1-406"/>
</dbReference>
<dbReference type="PDB" id="8OW1">
    <property type="method" value="EM"/>
    <property type="resolution" value="3.70 A"/>
    <property type="chains" value="Q/QQ=1-406"/>
</dbReference>
<dbReference type="PDB" id="8T0P">
    <property type="method" value="X-ray"/>
    <property type="resolution" value="1.73 A"/>
    <property type="chains" value="A=125-275"/>
</dbReference>
<dbReference type="PDBsum" id="6NUW"/>
<dbReference type="PDBsum" id="6QLD"/>
<dbReference type="PDBsum" id="6QLE"/>
<dbReference type="PDBsum" id="6QLF"/>
<dbReference type="PDBsum" id="8OVW"/>
<dbReference type="PDBsum" id="8OVX"/>
<dbReference type="PDBsum" id="8OW0"/>
<dbReference type="PDBsum" id="8OW1"/>
<dbReference type="PDBsum" id="8T0P"/>
<dbReference type="EMDB" id="EMD-0523"/>
<dbReference type="EMDB" id="EMD-17224"/>
<dbReference type="EMDB" id="EMD-17225"/>
<dbReference type="EMDB" id="EMD-17226"/>
<dbReference type="EMDB" id="EMD-17227"/>
<dbReference type="EMDB" id="EMD-4579"/>
<dbReference type="EMDB" id="EMD-4580"/>
<dbReference type="EMDB" id="EMD-4581"/>
<dbReference type="SMR" id="P53298"/>
<dbReference type="BioGRID" id="33431">
    <property type="interactions" value="442"/>
</dbReference>
<dbReference type="ComplexPortal" id="CPX-1187">
    <property type="entry name" value="COMA complex"/>
</dbReference>
<dbReference type="ComplexPortal" id="CPX-2533">
    <property type="entry name" value="Kinetochore CCAN complex"/>
</dbReference>
<dbReference type="DIP" id="DIP-2382N"/>
<dbReference type="FunCoup" id="P53298">
    <property type="interactions" value="99"/>
</dbReference>
<dbReference type="IntAct" id="P53298">
    <property type="interactions" value="22"/>
</dbReference>
<dbReference type="MINT" id="P53298"/>
<dbReference type="STRING" id="4932.YGR179C"/>
<dbReference type="iPTMnet" id="P53298"/>
<dbReference type="PaxDb" id="4932-YGR179C"/>
<dbReference type="PeptideAtlas" id="P53298"/>
<dbReference type="EnsemblFungi" id="YGR179C_mRNA">
    <property type="protein sequence ID" value="YGR179C"/>
    <property type="gene ID" value="YGR179C"/>
</dbReference>
<dbReference type="GeneID" id="853090"/>
<dbReference type="KEGG" id="sce:YGR179C"/>
<dbReference type="AGR" id="SGD:S000003411"/>
<dbReference type="SGD" id="S000003411">
    <property type="gene designation" value="OKP1"/>
</dbReference>
<dbReference type="VEuPathDB" id="FungiDB:YGR179C"/>
<dbReference type="eggNOG" id="ENOG502S031">
    <property type="taxonomic scope" value="Eukaryota"/>
</dbReference>
<dbReference type="HOGENOM" id="CLU_058662_0_0_1"/>
<dbReference type="InParanoid" id="P53298"/>
<dbReference type="OMA" id="PSKIMIG"/>
<dbReference type="OrthoDB" id="4068255at2759"/>
<dbReference type="BioCyc" id="YEAST:G3O-30872-MONOMER"/>
<dbReference type="BioGRID-ORCS" id="853090">
    <property type="hits" value="6 hits in 10 CRISPR screens"/>
</dbReference>
<dbReference type="PRO" id="PR:P53298"/>
<dbReference type="Proteomes" id="UP000002311">
    <property type="component" value="Chromosome VII"/>
</dbReference>
<dbReference type="RNAct" id="P53298">
    <property type="molecule type" value="protein"/>
</dbReference>
<dbReference type="GO" id="GO:0000817">
    <property type="term" value="C:COMA complex"/>
    <property type="evidence" value="ECO:0000314"/>
    <property type="project" value="SGD"/>
</dbReference>
<dbReference type="GO" id="GO:0000776">
    <property type="term" value="C:kinetochore"/>
    <property type="evidence" value="ECO:0000314"/>
    <property type="project" value="SGD"/>
</dbReference>
<dbReference type="GO" id="GO:0008608">
    <property type="term" value="P:attachment of spindle microtubules to kinetochore"/>
    <property type="evidence" value="ECO:0000315"/>
    <property type="project" value="SGD"/>
</dbReference>
<dbReference type="GO" id="GO:0051301">
    <property type="term" value="P:cell division"/>
    <property type="evidence" value="ECO:0007669"/>
    <property type="project" value="UniProtKB-KW"/>
</dbReference>
<dbReference type="GO" id="GO:0051321">
    <property type="term" value="P:meiotic cell cycle"/>
    <property type="evidence" value="ECO:0007669"/>
    <property type="project" value="UniProtKB-KW"/>
</dbReference>
<reference key="1">
    <citation type="journal article" date="1997" name="Nature">
        <title>The nucleotide sequence of Saccharomyces cerevisiae chromosome VII.</title>
        <authorList>
            <person name="Tettelin H."/>
            <person name="Agostoni-Carbone M.L."/>
            <person name="Albermann K."/>
            <person name="Albers M."/>
            <person name="Arroyo J."/>
            <person name="Backes U."/>
            <person name="Barreiros T."/>
            <person name="Bertani I."/>
            <person name="Bjourson A.J."/>
            <person name="Brueckner M."/>
            <person name="Bruschi C.V."/>
            <person name="Carignani G."/>
            <person name="Castagnoli L."/>
            <person name="Cerdan E."/>
            <person name="Clemente M.L."/>
            <person name="Coblenz A."/>
            <person name="Coglievina M."/>
            <person name="Coissac E."/>
            <person name="Defoor E."/>
            <person name="Del Bino S."/>
            <person name="Delius H."/>
            <person name="Delneri D."/>
            <person name="de Wergifosse P."/>
            <person name="Dujon B."/>
            <person name="Durand P."/>
            <person name="Entian K.-D."/>
            <person name="Eraso P."/>
            <person name="Escribano V."/>
            <person name="Fabiani L."/>
            <person name="Fartmann B."/>
            <person name="Feroli F."/>
            <person name="Feuermann M."/>
            <person name="Frontali L."/>
            <person name="Garcia-Gonzalez M."/>
            <person name="Garcia-Saez M.I."/>
            <person name="Goffeau A."/>
            <person name="Guerreiro P."/>
            <person name="Hani J."/>
            <person name="Hansen M."/>
            <person name="Hebling U."/>
            <person name="Hernandez K."/>
            <person name="Heumann K."/>
            <person name="Hilger F."/>
            <person name="Hofmann B."/>
            <person name="Indge K.J."/>
            <person name="James C.M."/>
            <person name="Klima R."/>
            <person name="Koetter P."/>
            <person name="Kramer B."/>
            <person name="Kramer W."/>
            <person name="Lauquin G."/>
            <person name="Leuther H."/>
            <person name="Louis E.J."/>
            <person name="Maillier E."/>
            <person name="Marconi A."/>
            <person name="Martegani E."/>
            <person name="Mazon M.J."/>
            <person name="Mazzoni C."/>
            <person name="McReynolds A.D.K."/>
            <person name="Melchioretto P."/>
            <person name="Mewes H.-W."/>
            <person name="Minenkova O."/>
            <person name="Mueller-Auer S."/>
            <person name="Nawrocki A."/>
            <person name="Netter P."/>
            <person name="Neu R."/>
            <person name="Nombela C."/>
            <person name="Oliver S.G."/>
            <person name="Panzeri L."/>
            <person name="Paoluzi S."/>
            <person name="Plevani P."/>
            <person name="Portetelle D."/>
            <person name="Portillo F."/>
            <person name="Potier S."/>
            <person name="Purnelle B."/>
            <person name="Rieger M."/>
            <person name="Riles L."/>
            <person name="Rinaldi T."/>
            <person name="Robben J."/>
            <person name="Rodrigues-Pousada C."/>
            <person name="Rodriguez-Belmonte E."/>
            <person name="Rodriguez-Torres A.M."/>
            <person name="Rose M."/>
            <person name="Ruzzi M."/>
            <person name="Saliola M."/>
            <person name="Sanchez-Perez M."/>
            <person name="Schaefer B."/>
            <person name="Schaefer M."/>
            <person name="Scharfe M."/>
            <person name="Schmidheini T."/>
            <person name="Schreer A."/>
            <person name="Skala J."/>
            <person name="Souciet J.-L."/>
            <person name="Steensma H.Y."/>
            <person name="Talla E."/>
            <person name="Thierry A."/>
            <person name="Vandenbol M."/>
            <person name="van der Aart Q.J.M."/>
            <person name="Van Dyck L."/>
            <person name="Vanoni M."/>
            <person name="Verhasselt P."/>
            <person name="Voet M."/>
            <person name="Volckaert G."/>
            <person name="Wambutt R."/>
            <person name="Watson M.D."/>
            <person name="Weber N."/>
            <person name="Wedler E."/>
            <person name="Wedler H."/>
            <person name="Wipfli P."/>
            <person name="Wolf K."/>
            <person name="Wright L.F."/>
            <person name="Zaccaria P."/>
            <person name="Zimmermann M."/>
            <person name="Zollner A."/>
            <person name="Kleine K."/>
        </authorList>
    </citation>
    <scope>NUCLEOTIDE SEQUENCE [LARGE SCALE GENOMIC DNA]</scope>
    <source>
        <strain>ATCC 204508 / S288c</strain>
    </source>
</reference>
<reference key="2">
    <citation type="journal article" date="2014" name="G3 (Bethesda)">
        <title>The reference genome sequence of Saccharomyces cerevisiae: Then and now.</title>
        <authorList>
            <person name="Engel S.R."/>
            <person name="Dietrich F.S."/>
            <person name="Fisk D.G."/>
            <person name="Binkley G."/>
            <person name="Balakrishnan R."/>
            <person name="Costanzo M.C."/>
            <person name="Dwight S.S."/>
            <person name="Hitz B.C."/>
            <person name="Karra K."/>
            <person name="Nash R.S."/>
            <person name="Weng S."/>
            <person name="Wong E.D."/>
            <person name="Lloyd P."/>
            <person name="Skrzypek M.S."/>
            <person name="Miyasato S.R."/>
            <person name="Simison M."/>
            <person name="Cherry J.M."/>
        </authorList>
    </citation>
    <scope>GENOME REANNOTATION</scope>
    <source>
        <strain>ATCC 204508 / S288c</strain>
    </source>
</reference>
<reference key="3">
    <citation type="journal article" date="2007" name="Genome Res.">
        <title>Approaching a complete repository of sequence-verified protein-encoding clones for Saccharomyces cerevisiae.</title>
        <authorList>
            <person name="Hu Y."/>
            <person name="Rolfs A."/>
            <person name="Bhullar B."/>
            <person name="Murthy T.V.S."/>
            <person name="Zhu C."/>
            <person name="Berger M.F."/>
            <person name="Camargo A.A."/>
            <person name="Kelley F."/>
            <person name="McCarron S."/>
            <person name="Jepson D."/>
            <person name="Richardson A."/>
            <person name="Raphael J."/>
            <person name="Moreira D."/>
            <person name="Taycher E."/>
            <person name="Zuo D."/>
            <person name="Mohr S."/>
            <person name="Kane M.F."/>
            <person name="Williamson J."/>
            <person name="Simpson A.J.G."/>
            <person name="Bulyk M.L."/>
            <person name="Harlow E."/>
            <person name="Marsischky G."/>
            <person name="Kolodner R.D."/>
            <person name="LaBaer J."/>
        </authorList>
    </citation>
    <scope>NUCLEOTIDE SEQUENCE [GENOMIC DNA]</scope>
    <source>
        <strain>ATCC 204508 / S288c</strain>
    </source>
</reference>
<reference key="4">
    <citation type="journal article" date="1999" name="Genes Dev.">
        <title>A putative protein complex consisting of Ctf19, Mcm21, and Okp1 represents a missing link in the budding yeast kinetochore.</title>
        <authorList>
            <person name="Ortiz J."/>
            <person name="Stemmann O."/>
            <person name="Rank S."/>
            <person name="Lechner J."/>
        </authorList>
    </citation>
    <scope>INTERACTION WITH CTF19 AND MCM21</scope>
    <scope>SUBCELLULAR LOCATION</scope>
</reference>
<reference key="5">
    <citation type="journal article" date="2002" name="Cell">
        <title>Phospho-regulation of kinetochore-microtubule attachments by the Aurora kinase Ipl1p.</title>
        <authorList>
            <person name="Cheeseman I.M."/>
            <person name="Anderson S."/>
            <person name="Jwa M."/>
            <person name="Green E.M."/>
            <person name="Kang J.-S."/>
            <person name="Yates J.R. III"/>
            <person name="Chan C.S.M."/>
            <person name="Drubin D.G."/>
            <person name="Barnes G."/>
        </authorList>
    </citation>
    <scope>IDENTIFICATION BY MASS SPECTROMETRY</scope>
    <scope>COMPONENT OF CTF19 COMPLEX</scope>
</reference>
<reference key="6">
    <citation type="journal article" date="2003" name="Genes Dev.">
        <title>Hierarchical assembly of the budding yeast kinetochore from multiple subcomplexes.</title>
        <authorList>
            <person name="De Wulf P."/>
            <person name="McAinsh A.D."/>
            <person name="Sorger P.K."/>
        </authorList>
    </citation>
    <scope>IDENTIFICATION BY MASS SPECTROMETRY</scope>
    <scope>COMPONENT OF COMA COMPLEX</scope>
</reference>
<reference key="7">
    <citation type="journal article" date="2003" name="Mol. Cell">
        <title>Assigning function to yeast proteins by integration of technologies.</title>
        <authorList>
            <person name="Hazbun T.R."/>
            <person name="Malmstroem L."/>
            <person name="Anderson S."/>
            <person name="Graczyk B.J."/>
            <person name="Fox B."/>
            <person name="Riffle M."/>
            <person name="Sundin B.A."/>
            <person name="Aranda J.D."/>
            <person name="McDonald W.H."/>
            <person name="Chiu C.-H."/>
            <person name="Snydsman B.E."/>
            <person name="Bradley P."/>
            <person name="Muller E.G.D."/>
            <person name="Fields S."/>
            <person name="Baker D."/>
            <person name="Yates J.R. III"/>
            <person name="Davis T.N."/>
        </authorList>
    </citation>
    <scope>IDENTIFICATION BY MASS SPECTROMETRY</scope>
</reference>
<reference key="8">
    <citation type="journal article" date="2003" name="Nature">
        <title>Global analysis of protein localization in budding yeast.</title>
        <authorList>
            <person name="Huh W.-K."/>
            <person name="Falvo J.V."/>
            <person name="Gerke L.C."/>
            <person name="Carroll A.S."/>
            <person name="Howson R.W."/>
            <person name="Weissman J.S."/>
            <person name="O'Shea E.K."/>
        </authorList>
    </citation>
    <scope>SUBCELLULAR LOCATION [LARGE SCALE ANALYSIS]</scope>
</reference>
<reference key="9">
    <citation type="journal article" date="2003" name="Nature">
        <title>Global analysis of protein expression in yeast.</title>
        <authorList>
            <person name="Ghaemmaghami S."/>
            <person name="Huh W.-K."/>
            <person name="Bower K."/>
            <person name="Howson R.W."/>
            <person name="Belle A."/>
            <person name="Dephoure N."/>
            <person name="O'Shea E.K."/>
            <person name="Weissman J.S."/>
        </authorList>
    </citation>
    <scope>LEVEL OF PROTEIN EXPRESSION [LARGE SCALE ANALYSIS]</scope>
</reference>
<reference key="10">
    <citation type="journal article" date="2008" name="Mol. Cell. Proteomics">
        <title>A multidimensional chromatography technology for in-depth phosphoproteome analysis.</title>
        <authorList>
            <person name="Albuquerque C.P."/>
            <person name="Smolka M.B."/>
            <person name="Payne S.H."/>
            <person name="Bafna V."/>
            <person name="Eng J."/>
            <person name="Zhou H."/>
        </authorList>
    </citation>
    <scope>PHOSPHORYLATION [LARGE SCALE ANALYSIS] AT SER-70</scope>
    <scope>IDENTIFICATION BY MASS SPECTROMETRY [LARGE SCALE ANALYSIS]</scope>
</reference>
<reference key="11">
    <citation type="journal article" date="2009" name="Science">
        <title>Global analysis of Cdk1 substrate phosphorylation sites provides insights into evolution.</title>
        <authorList>
            <person name="Holt L.J."/>
            <person name="Tuch B.B."/>
            <person name="Villen J."/>
            <person name="Johnson A.D."/>
            <person name="Gygi S.P."/>
            <person name="Morgan D.O."/>
        </authorList>
    </citation>
    <scope>PHOSPHORYLATION [LARGE SCALE ANALYSIS] AT SER-70</scope>
    <scope>IDENTIFICATION BY MASS SPECTROMETRY [LARGE SCALE ANALYSIS]</scope>
</reference>
<reference key="12">
    <citation type="journal article" date="2012" name="Nat. Cell Biol.">
        <title>CENP-T proteins are conserved centromere receptors of the Ndc80 complex.</title>
        <authorList>
            <person name="Schleiffer A."/>
            <person name="Maier M."/>
            <person name="Litos G."/>
            <person name="Lampert F."/>
            <person name="Hornung P."/>
            <person name="Mechtler K."/>
            <person name="Westermann S."/>
        </authorList>
    </citation>
    <scope>IDENTIFICATION IN CCAN</scope>
    <scope>SUBUNIT</scope>
</reference>
<reference key="13">
    <citation type="journal article" date="2017" name="EMBO J.">
        <title>Molecular basis for inner kinetochore configuration through RWD domain-peptide interactions.</title>
        <authorList>
            <person name="Schmitzberger F."/>
            <person name="Richter M.M."/>
            <person name="Gordiyenko Y."/>
            <person name="Robinson C.V."/>
            <person name="Dadlez M."/>
            <person name="Westermann S."/>
        </authorList>
    </citation>
    <scope>INTERACTION WITH NKP1 AND NKP2</scope>
    <scope>SUBUNIT</scope>
</reference>
<keyword id="KW-0002">3D-structure</keyword>
<keyword id="KW-0131">Cell cycle</keyword>
<keyword id="KW-0132">Cell division</keyword>
<keyword id="KW-0137">Centromere</keyword>
<keyword id="KW-0158">Chromosome</keyword>
<keyword id="KW-0175">Coiled coil</keyword>
<keyword id="KW-0995">Kinetochore</keyword>
<keyword id="KW-0469">Meiosis</keyword>
<keyword id="KW-0498">Mitosis</keyword>
<keyword id="KW-0539">Nucleus</keyword>
<keyword id="KW-0597">Phosphoprotein</keyword>
<keyword id="KW-1185">Reference proteome</keyword>
<organism>
    <name type="scientific">Saccharomyces cerevisiae (strain ATCC 204508 / S288c)</name>
    <name type="common">Baker's yeast</name>
    <dbReference type="NCBI Taxonomy" id="559292"/>
    <lineage>
        <taxon>Eukaryota</taxon>
        <taxon>Fungi</taxon>
        <taxon>Dikarya</taxon>
        <taxon>Ascomycota</taxon>
        <taxon>Saccharomycotina</taxon>
        <taxon>Saccharomycetes</taxon>
        <taxon>Saccharomycetales</taxon>
        <taxon>Saccharomycetaceae</taxon>
        <taxon>Saccharomyces</taxon>
    </lineage>
</organism>
<protein>
    <recommendedName>
        <fullName evidence="13">Inner kinetochore subunit OKP1</fullName>
    </recommendedName>
    <alternativeName>
        <fullName evidence="12">CENP-Q homolog</fullName>
    </alternativeName>
    <alternativeName>
        <fullName evidence="13">Constitutive centromere-associated network protein OKP1</fullName>
    </alternativeName>
    <alternativeName>
        <fullName evidence="11">Outer kinetochore protein 1</fullName>
    </alternativeName>
</protein>